<dbReference type="EC" id="2.7.8.5" evidence="1"/>
<dbReference type="EMBL" id="BX248583">
    <property type="protein sequence ID" value="CAD83479.1"/>
    <property type="molecule type" value="Genomic_DNA"/>
</dbReference>
<dbReference type="SMR" id="Q7VR12"/>
<dbReference type="STRING" id="203907.Bfl415"/>
<dbReference type="KEGG" id="bfl:Bfl415"/>
<dbReference type="eggNOG" id="COG0558">
    <property type="taxonomic scope" value="Bacteria"/>
</dbReference>
<dbReference type="HOGENOM" id="CLU_051314_2_1_6"/>
<dbReference type="OrthoDB" id="9796672at2"/>
<dbReference type="UniPathway" id="UPA00084">
    <property type="reaction ID" value="UER00503"/>
</dbReference>
<dbReference type="Proteomes" id="UP000002192">
    <property type="component" value="Chromosome"/>
</dbReference>
<dbReference type="GO" id="GO:0005886">
    <property type="term" value="C:plasma membrane"/>
    <property type="evidence" value="ECO:0007669"/>
    <property type="project" value="UniProtKB-SubCell"/>
</dbReference>
<dbReference type="GO" id="GO:0008444">
    <property type="term" value="F:CDP-diacylglycerol-glycerol-3-phosphate 3-phosphatidyltransferase activity"/>
    <property type="evidence" value="ECO:0007669"/>
    <property type="project" value="UniProtKB-UniRule"/>
</dbReference>
<dbReference type="GO" id="GO:0006655">
    <property type="term" value="P:phosphatidylglycerol biosynthetic process"/>
    <property type="evidence" value="ECO:0007669"/>
    <property type="project" value="UniProtKB-UniRule"/>
</dbReference>
<dbReference type="Gene3D" id="1.20.120.1760">
    <property type="match status" value="1"/>
</dbReference>
<dbReference type="HAMAP" id="MF_01437">
    <property type="entry name" value="PgsA"/>
    <property type="match status" value="1"/>
</dbReference>
<dbReference type="InterPro" id="IPR050324">
    <property type="entry name" value="CDP-alcohol_PTase-I"/>
</dbReference>
<dbReference type="InterPro" id="IPR000462">
    <property type="entry name" value="CDP-OH_P_trans"/>
</dbReference>
<dbReference type="InterPro" id="IPR043130">
    <property type="entry name" value="CDP-OH_PTrfase_TM_dom"/>
</dbReference>
<dbReference type="InterPro" id="IPR048254">
    <property type="entry name" value="CDP_ALCOHOL_P_TRANSF_CS"/>
</dbReference>
<dbReference type="InterPro" id="IPR023762">
    <property type="entry name" value="PGP_synthase_bac"/>
</dbReference>
<dbReference type="InterPro" id="IPR004570">
    <property type="entry name" value="Phosphatidylglycerol_P_synth"/>
</dbReference>
<dbReference type="NCBIfam" id="TIGR00560">
    <property type="entry name" value="pgsA"/>
    <property type="match status" value="1"/>
</dbReference>
<dbReference type="PANTHER" id="PTHR14269:SF62">
    <property type="entry name" value="CDP-DIACYLGLYCEROL--GLYCEROL-3-PHOSPHATE 3-PHOSPHATIDYLTRANSFERASE 1, CHLOROPLASTIC"/>
    <property type="match status" value="1"/>
</dbReference>
<dbReference type="PANTHER" id="PTHR14269">
    <property type="entry name" value="CDP-DIACYLGLYCEROL--GLYCEROL-3-PHOSPHATE 3-PHOSPHATIDYLTRANSFERASE-RELATED"/>
    <property type="match status" value="1"/>
</dbReference>
<dbReference type="Pfam" id="PF01066">
    <property type="entry name" value="CDP-OH_P_transf"/>
    <property type="match status" value="1"/>
</dbReference>
<dbReference type="PIRSF" id="PIRSF000847">
    <property type="entry name" value="Phos_ph_gly_syn"/>
    <property type="match status" value="1"/>
</dbReference>
<dbReference type="PROSITE" id="PS00379">
    <property type="entry name" value="CDP_ALCOHOL_P_TRANSF"/>
    <property type="match status" value="1"/>
</dbReference>
<evidence type="ECO:0000255" key="1">
    <source>
        <dbReference type="HAMAP-Rule" id="MF_01437"/>
    </source>
</evidence>
<comment type="function">
    <text evidence="1">Catalyzes the conversion of cytidine diphosphate diacylglycerol (CDP-DG) and glycerol 3-phosphate into phosphatidylglycerol. Essential for the synthesis of anionic phospholipids, thereby playing a role in balancing the ratio of zwitterionic and anionic phospholipids, which is thought to be important for normal membrane function.</text>
</comment>
<comment type="catalytic activity">
    <reaction evidence="1">
        <text>a CDP-1,2-diacyl-sn-glycerol + sn-glycerol 3-phosphate = a 1,2-diacyl-sn-glycero-3-phospho-(1'-sn-glycero-3'-phosphate) + CMP + H(+)</text>
        <dbReference type="Rhea" id="RHEA:12593"/>
        <dbReference type="ChEBI" id="CHEBI:15378"/>
        <dbReference type="ChEBI" id="CHEBI:57597"/>
        <dbReference type="ChEBI" id="CHEBI:58332"/>
        <dbReference type="ChEBI" id="CHEBI:60110"/>
        <dbReference type="ChEBI" id="CHEBI:60377"/>
        <dbReference type="EC" id="2.7.8.5"/>
    </reaction>
</comment>
<comment type="pathway">
    <text evidence="1">Phospholipid metabolism; phosphatidylglycerol biosynthesis; phosphatidylglycerol from CDP-diacylglycerol: step 1/2.</text>
</comment>
<comment type="subcellular location">
    <subcellularLocation>
        <location evidence="1">Cell inner membrane</location>
        <topology evidence="1">Multi-pass membrane protein</topology>
    </subcellularLocation>
</comment>
<comment type="similarity">
    <text evidence="1">Belongs to the CDP-alcohol phosphatidyltransferase class-I family.</text>
</comment>
<keyword id="KW-0997">Cell inner membrane</keyword>
<keyword id="KW-1003">Cell membrane</keyword>
<keyword id="KW-0444">Lipid biosynthesis</keyword>
<keyword id="KW-0443">Lipid metabolism</keyword>
<keyword id="KW-0472">Membrane</keyword>
<keyword id="KW-0594">Phospholipid biosynthesis</keyword>
<keyword id="KW-1208">Phospholipid metabolism</keyword>
<keyword id="KW-1185">Reference proteome</keyword>
<keyword id="KW-0808">Transferase</keyword>
<keyword id="KW-0812">Transmembrane</keyword>
<keyword id="KW-1133">Transmembrane helix</keyword>
<accession>Q7VR12</accession>
<proteinExistence type="inferred from homology"/>
<gene>
    <name evidence="1" type="primary">pgsA</name>
    <name type="ordered locus">Bfl415</name>
</gene>
<reference key="1">
    <citation type="journal article" date="2003" name="Proc. Natl. Acad. Sci. U.S.A.">
        <title>The genome sequence of Blochmannia floridanus: comparative analysis of reduced genomes.</title>
        <authorList>
            <person name="Gil R."/>
            <person name="Silva F.J."/>
            <person name="Zientz E."/>
            <person name="Delmotte F."/>
            <person name="Gonzalez-Candelas F."/>
            <person name="Latorre A."/>
            <person name="Rausell C."/>
            <person name="Kamerbeek J."/>
            <person name="Gadau J."/>
            <person name="Hoelldobler B."/>
            <person name="van Ham R.C.H.J."/>
            <person name="Gross R."/>
            <person name="Moya A."/>
        </authorList>
    </citation>
    <scope>NUCLEOTIDE SEQUENCE [LARGE SCALE GENOMIC DNA]</scope>
</reference>
<sequence length="190" mass="22342">MFKYYGVFNIPMYLTLFRIIMVPCFVAVFYWPIYWSPMLCTLIFFIAAITDWFDGFLARRWNQTSRIGGFLDPIADKIMIITALILISEHFHVWWMTLPISSIIIREILISSLRECIARVDNKNNISVIWLSKVKTFAQMLALIALLCRLNEWTVIMGVISLYTAMLLTLWSMCYYVYSVSSILLQYKLK</sequence>
<protein>
    <recommendedName>
        <fullName evidence="1">CDP-diacylglycerol--glycerol-3-phosphate 3-phosphatidyltransferase</fullName>
        <ecNumber evidence="1">2.7.8.5</ecNumber>
    </recommendedName>
    <alternativeName>
        <fullName evidence="1">Phosphatidylglycerophosphate synthase</fullName>
        <shortName evidence="1">PGP synthase</shortName>
    </alternativeName>
</protein>
<feature type="chain" id="PRO_0000239121" description="CDP-diacylglycerol--glycerol-3-phosphate 3-phosphatidyltransferase">
    <location>
        <begin position="1"/>
        <end position="190"/>
    </location>
</feature>
<feature type="topological domain" description="Cytoplasmic" evidence="1">
    <location>
        <begin position="6"/>
        <end position="17"/>
    </location>
</feature>
<feature type="transmembrane region" description="Helical" evidence="1">
    <location>
        <begin position="18"/>
        <end position="42"/>
    </location>
</feature>
<feature type="topological domain" description="Periplasmic" evidence="1">
    <location>
        <begin position="43"/>
        <end position="65"/>
    </location>
</feature>
<feature type="transmembrane region" description="Helical" evidence="1">
    <location>
        <begin position="66"/>
        <end position="86"/>
    </location>
</feature>
<feature type="topological domain" description="Cytoplasmic" evidence="1">
    <location>
        <begin position="87"/>
        <end position="91"/>
    </location>
</feature>
<feature type="transmembrane region" description="Helical" evidence="1">
    <location>
        <begin position="92"/>
        <end position="112"/>
    </location>
</feature>
<feature type="topological domain" description="Periplasmic" evidence="1">
    <location>
        <begin position="113"/>
        <end position="150"/>
    </location>
</feature>
<feature type="transmembrane region" description="Helical" evidence="1">
    <location>
        <begin position="151"/>
        <end position="173"/>
    </location>
</feature>
<feature type="topological domain" description="Cytoplasmic" evidence="1">
    <location>
        <begin position="174"/>
        <end position="186"/>
    </location>
</feature>
<name>PGSA_BLOFL</name>
<organism>
    <name type="scientific">Blochmanniella floridana</name>
    <dbReference type="NCBI Taxonomy" id="203907"/>
    <lineage>
        <taxon>Bacteria</taxon>
        <taxon>Pseudomonadati</taxon>
        <taxon>Pseudomonadota</taxon>
        <taxon>Gammaproteobacteria</taxon>
        <taxon>Enterobacterales</taxon>
        <taxon>Enterobacteriaceae</taxon>
        <taxon>ant endosymbionts</taxon>
        <taxon>Candidatus Blochmanniella</taxon>
    </lineage>
</organism>